<evidence type="ECO:0000255" key="1">
    <source>
        <dbReference type="HAMAP-Rule" id="MF_01684"/>
    </source>
</evidence>
<accession>A7Z721</accession>
<protein>
    <recommendedName>
        <fullName evidence="1">5'-methylthioadenosine/S-adenosylhomocysteine nucleosidase</fullName>
        <shortName evidence="1">MTA/SAH nucleosidase</shortName>
        <shortName evidence="1">MTAN</shortName>
        <ecNumber evidence="1">3.2.2.9</ecNumber>
    </recommendedName>
    <alternativeName>
        <fullName evidence="1">5'-deoxyadenosine nucleosidase</fullName>
        <shortName evidence="1">DOA nucleosidase</shortName>
        <shortName evidence="1">dAdo nucleosidase</shortName>
    </alternativeName>
    <alternativeName>
        <fullName evidence="1">5'-methylthioadenosine nucleosidase</fullName>
        <shortName evidence="1">MTA nucleosidase</shortName>
    </alternativeName>
    <alternativeName>
        <fullName evidence="1">S-adenosylhomocysteine nucleosidase</fullName>
        <shortName evidence="1">AdoHcy nucleosidase</shortName>
        <shortName evidence="1">SAH nucleosidase</shortName>
        <shortName evidence="1">SRH nucleosidase</shortName>
    </alternativeName>
</protein>
<feature type="chain" id="PRO_0000359271" description="5'-methylthioadenosine/S-adenosylhomocysteine nucleosidase">
    <location>
        <begin position="1"/>
        <end position="231"/>
    </location>
</feature>
<feature type="active site" description="Proton acceptor" evidence="1">
    <location>
        <position position="12"/>
    </location>
</feature>
<feature type="active site" description="Proton donor" evidence="1">
    <location>
        <position position="198"/>
    </location>
</feature>
<feature type="binding site" evidence="1">
    <location>
        <position position="78"/>
    </location>
    <ligand>
        <name>substrate</name>
    </ligand>
</feature>
<feature type="binding site" evidence="1">
    <location>
        <position position="153"/>
    </location>
    <ligand>
        <name>substrate</name>
    </ligand>
</feature>
<feature type="binding site" evidence="1">
    <location>
        <begin position="174"/>
        <end position="175"/>
    </location>
    <ligand>
        <name>substrate</name>
    </ligand>
</feature>
<comment type="function">
    <text evidence="1">Catalyzes the irreversible cleavage of the glycosidic bond in both 5'-methylthioadenosine (MTA) and S-adenosylhomocysteine (SAH/AdoHcy) to adenine and the corresponding thioribose, 5'-methylthioribose and S-ribosylhomocysteine, respectively. Also cleaves 5'-deoxyadenosine, a toxic by-product of radical S-adenosylmethionine (SAM) enzymes, into 5-deoxyribose and adenine.</text>
</comment>
<comment type="catalytic activity">
    <reaction evidence="1">
        <text>S-adenosyl-L-homocysteine + H2O = S-(5-deoxy-D-ribos-5-yl)-L-homocysteine + adenine</text>
        <dbReference type="Rhea" id="RHEA:17805"/>
        <dbReference type="ChEBI" id="CHEBI:15377"/>
        <dbReference type="ChEBI" id="CHEBI:16708"/>
        <dbReference type="ChEBI" id="CHEBI:57856"/>
        <dbReference type="ChEBI" id="CHEBI:58195"/>
        <dbReference type="EC" id="3.2.2.9"/>
    </reaction>
</comment>
<comment type="catalytic activity">
    <reaction evidence="1">
        <text>S-methyl-5'-thioadenosine + H2O = 5-(methylsulfanyl)-D-ribose + adenine</text>
        <dbReference type="Rhea" id="RHEA:13617"/>
        <dbReference type="ChEBI" id="CHEBI:15377"/>
        <dbReference type="ChEBI" id="CHEBI:16708"/>
        <dbReference type="ChEBI" id="CHEBI:17509"/>
        <dbReference type="ChEBI" id="CHEBI:78440"/>
        <dbReference type="EC" id="3.2.2.9"/>
    </reaction>
</comment>
<comment type="catalytic activity">
    <reaction evidence="1">
        <text>5'-deoxyadenosine + H2O = 5-deoxy-D-ribose + adenine</text>
        <dbReference type="Rhea" id="RHEA:29859"/>
        <dbReference type="ChEBI" id="CHEBI:15377"/>
        <dbReference type="ChEBI" id="CHEBI:16708"/>
        <dbReference type="ChEBI" id="CHEBI:17319"/>
        <dbReference type="ChEBI" id="CHEBI:149540"/>
        <dbReference type="EC" id="3.2.2.9"/>
    </reaction>
    <physiologicalReaction direction="left-to-right" evidence="1">
        <dbReference type="Rhea" id="RHEA:29860"/>
    </physiologicalReaction>
</comment>
<comment type="pathway">
    <text evidence="1">Amino-acid biosynthesis; L-methionine biosynthesis via salvage pathway; S-methyl-5-thio-alpha-D-ribose 1-phosphate from S-methyl-5'-thioadenosine (hydrolase route): step 1/2.</text>
</comment>
<comment type="similarity">
    <text evidence="1">Belongs to the PNP/UDP phosphorylase family. MtnN subfamily.</text>
</comment>
<sequence>MKLAVIGAMEEEVTILRSKLKDAKQEMIAHCEFTTGSYEGVEVILLKSGIGKVNAAISTTLLLDRFKPDYVINTGSAGGFHHTLNVGDVVISTDVRHHDVDVTAFDYEYGQVPGLPAAYKADEKLISITEEAVSELNGIQVAKGTIATGDSFMNDPKRVEDVRAKFADLYAVEMEAAAVAQVCHQFKTPFVVIRALSDIAGKESDVSFDKFLEQAAVHSTELVLNVIKRIH</sequence>
<gene>
    <name evidence="1" type="primary">mtnN</name>
    <name type="ordered locus">RBAM_024370</name>
</gene>
<reference key="1">
    <citation type="journal article" date="2007" name="Nat. Biotechnol.">
        <title>Comparative analysis of the complete genome sequence of the plant growth-promoting bacterium Bacillus amyloliquefaciens FZB42.</title>
        <authorList>
            <person name="Chen X.H."/>
            <person name="Koumoutsi A."/>
            <person name="Scholz R."/>
            <person name="Eisenreich A."/>
            <person name="Schneider K."/>
            <person name="Heinemeyer I."/>
            <person name="Morgenstern B."/>
            <person name="Voss B."/>
            <person name="Hess W.R."/>
            <person name="Reva O."/>
            <person name="Junge H."/>
            <person name="Voigt B."/>
            <person name="Jungblut P.R."/>
            <person name="Vater J."/>
            <person name="Suessmuth R."/>
            <person name="Liesegang H."/>
            <person name="Strittmatter A."/>
            <person name="Gottschalk G."/>
            <person name="Borriss R."/>
        </authorList>
    </citation>
    <scope>NUCLEOTIDE SEQUENCE [LARGE SCALE GENOMIC DNA]</scope>
    <source>
        <strain>DSM 23117 / BGSC 10A6 / LMG 26770 / FZB42</strain>
    </source>
</reference>
<proteinExistence type="inferred from homology"/>
<dbReference type="EC" id="3.2.2.9" evidence="1"/>
<dbReference type="EMBL" id="CP000560">
    <property type="protein sequence ID" value="ABS74797.1"/>
    <property type="molecule type" value="Genomic_DNA"/>
</dbReference>
<dbReference type="RefSeq" id="WP_003152774.1">
    <property type="nucleotide sequence ID" value="NC_009725.2"/>
</dbReference>
<dbReference type="SMR" id="A7Z721"/>
<dbReference type="GeneID" id="93081577"/>
<dbReference type="KEGG" id="bay:RBAM_024370"/>
<dbReference type="HOGENOM" id="CLU_031248_2_2_9"/>
<dbReference type="UniPathway" id="UPA00904">
    <property type="reaction ID" value="UER00871"/>
</dbReference>
<dbReference type="Proteomes" id="UP000001120">
    <property type="component" value="Chromosome"/>
</dbReference>
<dbReference type="GO" id="GO:0005829">
    <property type="term" value="C:cytosol"/>
    <property type="evidence" value="ECO:0007669"/>
    <property type="project" value="TreeGrafter"/>
</dbReference>
<dbReference type="GO" id="GO:0008782">
    <property type="term" value="F:adenosylhomocysteine nucleosidase activity"/>
    <property type="evidence" value="ECO:0007669"/>
    <property type="project" value="UniProtKB-UniRule"/>
</dbReference>
<dbReference type="GO" id="GO:0008930">
    <property type="term" value="F:methylthioadenosine nucleosidase activity"/>
    <property type="evidence" value="ECO:0007669"/>
    <property type="project" value="UniProtKB-UniRule"/>
</dbReference>
<dbReference type="GO" id="GO:0019509">
    <property type="term" value="P:L-methionine salvage from methylthioadenosine"/>
    <property type="evidence" value="ECO:0007669"/>
    <property type="project" value="UniProtKB-UniRule"/>
</dbReference>
<dbReference type="GO" id="GO:0019284">
    <property type="term" value="P:L-methionine salvage from S-adenosylmethionine"/>
    <property type="evidence" value="ECO:0007669"/>
    <property type="project" value="TreeGrafter"/>
</dbReference>
<dbReference type="GO" id="GO:0009164">
    <property type="term" value="P:nucleoside catabolic process"/>
    <property type="evidence" value="ECO:0007669"/>
    <property type="project" value="InterPro"/>
</dbReference>
<dbReference type="CDD" id="cd09008">
    <property type="entry name" value="MTAN"/>
    <property type="match status" value="1"/>
</dbReference>
<dbReference type="FunFam" id="3.40.50.1580:FF:000001">
    <property type="entry name" value="MTA/SAH nucleosidase family protein"/>
    <property type="match status" value="1"/>
</dbReference>
<dbReference type="Gene3D" id="3.40.50.1580">
    <property type="entry name" value="Nucleoside phosphorylase domain"/>
    <property type="match status" value="1"/>
</dbReference>
<dbReference type="HAMAP" id="MF_01684">
    <property type="entry name" value="Salvage_MtnN"/>
    <property type="match status" value="1"/>
</dbReference>
<dbReference type="InterPro" id="IPR010049">
    <property type="entry name" value="MTA_SAH_Nsdase"/>
</dbReference>
<dbReference type="InterPro" id="IPR000845">
    <property type="entry name" value="Nucleoside_phosphorylase_d"/>
</dbReference>
<dbReference type="InterPro" id="IPR035994">
    <property type="entry name" value="Nucleoside_phosphorylase_sf"/>
</dbReference>
<dbReference type="NCBIfam" id="TIGR01704">
    <property type="entry name" value="MTA_SAH-Nsdase"/>
    <property type="match status" value="1"/>
</dbReference>
<dbReference type="NCBIfam" id="NF004079">
    <property type="entry name" value="PRK05584.1"/>
    <property type="match status" value="1"/>
</dbReference>
<dbReference type="PANTHER" id="PTHR46832">
    <property type="entry name" value="5'-METHYLTHIOADENOSINE/S-ADENOSYLHOMOCYSTEINE NUCLEOSIDASE"/>
    <property type="match status" value="1"/>
</dbReference>
<dbReference type="PANTHER" id="PTHR46832:SF1">
    <property type="entry name" value="5'-METHYLTHIOADENOSINE_S-ADENOSYLHOMOCYSTEINE NUCLEOSIDASE"/>
    <property type="match status" value="1"/>
</dbReference>
<dbReference type="Pfam" id="PF01048">
    <property type="entry name" value="PNP_UDP_1"/>
    <property type="match status" value="1"/>
</dbReference>
<dbReference type="SUPFAM" id="SSF53167">
    <property type="entry name" value="Purine and uridine phosphorylases"/>
    <property type="match status" value="1"/>
</dbReference>
<name>MTNN_BACVZ</name>
<keyword id="KW-0028">Amino-acid biosynthesis</keyword>
<keyword id="KW-0378">Hydrolase</keyword>
<keyword id="KW-0486">Methionine biosynthesis</keyword>
<organism>
    <name type="scientific">Bacillus velezensis (strain DSM 23117 / BGSC 10A6 / LMG 26770 / FZB42)</name>
    <name type="common">Bacillus amyloliquefaciens subsp. plantarum</name>
    <dbReference type="NCBI Taxonomy" id="326423"/>
    <lineage>
        <taxon>Bacteria</taxon>
        <taxon>Bacillati</taxon>
        <taxon>Bacillota</taxon>
        <taxon>Bacilli</taxon>
        <taxon>Bacillales</taxon>
        <taxon>Bacillaceae</taxon>
        <taxon>Bacillus</taxon>
        <taxon>Bacillus amyloliquefaciens group</taxon>
    </lineage>
</organism>